<organism>
    <name type="scientific">Thermotoga maritima (strain ATCC 43589 / DSM 3109 / JCM 10099 / NBRC 100826 / MSB8)</name>
    <dbReference type="NCBI Taxonomy" id="243274"/>
    <lineage>
        <taxon>Bacteria</taxon>
        <taxon>Thermotogati</taxon>
        <taxon>Thermotogota</taxon>
        <taxon>Thermotogae</taxon>
        <taxon>Thermotogales</taxon>
        <taxon>Thermotogaceae</taxon>
        <taxon>Thermotoga</taxon>
    </lineage>
</organism>
<protein>
    <recommendedName>
        <fullName evidence="1 4">Uronate isomerase</fullName>
        <ecNumber evidence="1 3">5.3.1.12</ecNumber>
    </recommendedName>
    <alternativeName>
        <fullName evidence="5">D-GalA/D-TagA isomerase</fullName>
    </alternativeName>
    <alternativeName>
        <fullName evidence="5">D-GlcA/D-FruA isomerase</fullName>
    </alternativeName>
    <alternativeName>
        <fullName evidence="1">Glucuronate isomerase</fullName>
    </alternativeName>
    <alternativeName>
        <fullName evidence="5">Hexuronate isomerase</fullName>
    </alternativeName>
    <alternativeName>
        <fullName evidence="1">Uronic isomerase</fullName>
    </alternativeName>
</protein>
<reference key="1">
    <citation type="journal article" date="1999" name="Nature">
        <title>Evidence for lateral gene transfer between Archaea and Bacteria from genome sequence of Thermotoga maritima.</title>
        <authorList>
            <person name="Nelson K.E."/>
            <person name="Clayton R.A."/>
            <person name="Gill S.R."/>
            <person name="Gwinn M.L."/>
            <person name="Dodson R.J."/>
            <person name="Haft D.H."/>
            <person name="Hickey E.K."/>
            <person name="Peterson J.D."/>
            <person name="Nelson W.C."/>
            <person name="Ketchum K.A."/>
            <person name="McDonald L.A."/>
            <person name="Utterback T.R."/>
            <person name="Malek J.A."/>
            <person name="Linher K.D."/>
            <person name="Garrett M.M."/>
            <person name="Stewart A.M."/>
            <person name="Cotton M.D."/>
            <person name="Pratt M.S."/>
            <person name="Phillips C.A."/>
            <person name="Richardson D.L."/>
            <person name="Heidelberg J.F."/>
            <person name="Sutton G.G."/>
            <person name="Fleischmann R.D."/>
            <person name="Eisen J.A."/>
            <person name="White O."/>
            <person name="Salzberg S.L."/>
            <person name="Smith H.O."/>
            <person name="Venter J.C."/>
            <person name="Fraser C.M."/>
        </authorList>
    </citation>
    <scope>NUCLEOTIDE SEQUENCE [LARGE SCALE GENOMIC DNA]</scope>
    <source>
        <strain>ATCC 43589 / DSM 3109 / JCM 10099 / NBRC 100826 / MSB8</strain>
    </source>
</reference>
<reference key="2">
    <citation type="journal article" date="2012" name="Environ. Microbiol.">
        <title>Tagaturonate-fructuronate epimerase UxaE, a novel enzyme in the hexuronate catabolic network in Thermotoga maritima.</title>
        <authorList>
            <person name="Rodionova I.A."/>
            <person name="Scott D.A."/>
            <person name="Grishin N.V."/>
            <person name="Osterman A.L."/>
            <person name="Rodionov D.A."/>
        </authorList>
    </citation>
    <scope>CATALYTIC ACTIVITY</scope>
    <scope>BIOPHYSICOCHEMICAL PROPERTIES</scope>
</reference>
<reference key="3">
    <citation type="journal article" date="2003" name="Proteins">
        <title>Crystal structure of uronate isomerase (TM0064) from Thermotoga maritima at 2.85 A resolution.</title>
        <authorList>
            <person name="Schwarzenbacher R."/>
            <person name="Canaves J.M."/>
            <person name="Brinen L.S."/>
            <person name="Dai X."/>
            <person name="Deacon A.M."/>
            <person name="Elsliger M.-A."/>
            <person name="Eshaghi S."/>
            <person name="Floyd R."/>
            <person name="Godzik A."/>
            <person name="Grittini C."/>
            <person name="Grzechnik S.K."/>
            <person name="Guda C."/>
            <person name="Jaroszewski L."/>
            <person name="Karlak C."/>
            <person name="Klock H.E."/>
            <person name="Koesema E."/>
            <person name="Kovarik J.S."/>
            <person name="Kreusch A."/>
            <person name="Kuhn P."/>
            <person name="Lesley S.A."/>
            <person name="McMullan D."/>
            <person name="McPhillips T.M."/>
            <person name="Miller M.A."/>
            <person name="Miller M.D."/>
            <person name="Morse A."/>
            <person name="Moy K."/>
            <person name="Ouyang J."/>
            <person name="Robb A."/>
            <person name="Rodrigues K."/>
            <person name="Selby T.L."/>
            <person name="Spraggon G."/>
            <person name="Stevens R.C."/>
            <person name="van den Bedem H."/>
            <person name="Velasquez J."/>
            <person name="Vincent J."/>
            <person name="Wang X."/>
            <person name="West B."/>
            <person name="Wolf G."/>
            <person name="Hodgson K.O."/>
            <person name="Wooley J."/>
            <person name="Wilson I.A."/>
        </authorList>
    </citation>
    <scope>X-RAY CRYSTALLOGRAPHY (2.85 ANGSTROMS)</scope>
    <scope>SUBUNIT</scope>
</reference>
<sequence length="451" mass="52306">MFLGEDYLLTNRAAVRLFNEVKDLPIVDPHNHLDAKDIVENKPWNDIWEVEGATDHYVWELMRRCGVSEEYITGSRSNKEKWLALAKVFPRFVGNPTYEWIHLDLWRRFNIKKVISEETAEEIWEETKKKLPEMTPQKLLRDMKVEILCTTDDPVSTLEHHRKAKEAVEGVTILPTWRPDRAMNVDKEGWREYVEKMGERYGEDTSTLDGFLNALWKSHEHFKEHGCVASDHALLEPSVYYVDENRARAVHEKAFSGEKLTQDEINDYKAFMMVQFGKMNQETNWVTQLHIGALRDYRDSLFKTLGPDSGGDISTNFLRIAEGLRYFLNEFDGKLKIVLYVLDPTHLPTISTIARAFPNVYVGAPWWFNDSPFGMEMHLKYLASVDLLYNLAGMVTDSRKLLSFGSRTEMFRRVLSNVVGEMVEKGQIPIKEARELVKHVSYDGPKALFFG</sequence>
<feature type="chain" id="PRO_0000172789" description="Uronate isomerase">
    <location>
        <begin position="1"/>
        <end position="451"/>
    </location>
</feature>
<feature type="turn" evidence="7">
    <location>
        <begin position="5"/>
        <end position="8"/>
    </location>
</feature>
<feature type="helix" evidence="7">
    <location>
        <begin position="12"/>
        <end position="21"/>
    </location>
</feature>
<feature type="strand" evidence="7">
    <location>
        <begin position="26"/>
        <end position="29"/>
    </location>
</feature>
<feature type="helix" evidence="7">
    <location>
        <begin position="35"/>
        <end position="40"/>
    </location>
</feature>
<feature type="helix" evidence="7">
    <location>
        <begin position="47"/>
        <end position="51"/>
    </location>
</feature>
<feature type="turn" evidence="7">
    <location>
        <begin position="52"/>
        <end position="54"/>
    </location>
</feature>
<feature type="helix" evidence="7">
    <location>
        <begin position="56"/>
        <end position="64"/>
    </location>
</feature>
<feature type="helix" evidence="7">
    <location>
        <begin position="69"/>
        <end position="71"/>
    </location>
</feature>
<feature type="strand" evidence="7">
    <location>
        <begin position="74"/>
        <end position="76"/>
    </location>
</feature>
<feature type="helix" evidence="7">
    <location>
        <begin position="78"/>
        <end position="88"/>
    </location>
</feature>
<feature type="helix" evidence="7">
    <location>
        <begin position="89"/>
        <end position="92"/>
    </location>
</feature>
<feature type="helix" evidence="7">
    <location>
        <begin position="96"/>
        <end position="108"/>
    </location>
</feature>
<feature type="helix" evidence="7">
    <location>
        <begin position="117"/>
        <end position="130"/>
    </location>
</feature>
<feature type="helix" evidence="7">
    <location>
        <begin position="136"/>
        <end position="142"/>
    </location>
</feature>
<feature type="strand" evidence="7">
    <location>
        <begin position="145"/>
        <end position="149"/>
    </location>
</feature>
<feature type="helix" evidence="7">
    <location>
        <begin position="159"/>
        <end position="167"/>
    </location>
</feature>
<feature type="strand" evidence="7">
    <location>
        <begin position="172"/>
        <end position="174"/>
    </location>
</feature>
<feature type="helix" evidence="7">
    <location>
        <begin position="180"/>
        <end position="183"/>
    </location>
</feature>
<feature type="helix" evidence="7">
    <location>
        <begin position="190"/>
        <end position="201"/>
    </location>
</feature>
<feature type="helix" evidence="7">
    <location>
        <begin position="208"/>
        <end position="223"/>
    </location>
</feature>
<feature type="turn" evidence="7">
    <location>
        <begin position="224"/>
        <end position="226"/>
    </location>
</feature>
<feature type="strand" evidence="7">
    <location>
        <begin position="229"/>
        <end position="236"/>
    </location>
</feature>
<feature type="helix" evidence="7">
    <location>
        <begin position="244"/>
        <end position="254"/>
    </location>
</feature>
<feature type="turn" evidence="7">
    <location>
        <begin position="255"/>
        <end position="257"/>
    </location>
</feature>
<feature type="helix" evidence="7">
    <location>
        <begin position="262"/>
        <end position="283"/>
    </location>
</feature>
<feature type="strand" evidence="7">
    <location>
        <begin position="286"/>
        <end position="291"/>
    </location>
</feature>
<feature type="helix" evidence="7">
    <location>
        <begin position="299"/>
        <end position="304"/>
    </location>
</feature>
<feature type="strand" evidence="7">
    <location>
        <begin position="307"/>
        <end position="310"/>
    </location>
</feature>
<feature type="helix" evidence="7">
    <location>
        <begin position="320"/>
        <end position="330"/>
    </location>
</feature>
<feature type="turn" evidence="7">
    <location>
        <begin position="332"/>
        <end position="334"/>
    </location>
</feature>
<feature type="strand" evidence="7">
    <location>
        <begin position="337"/>
        <end position="343"/>
    </location>
</feature>
<feature type="helix" evidence="7">
    <location>
        <begin position="344"/>
        <end position="346"/>
    </location>
</feature>
<feature type="helix" evidence="7">
    <location>
        <begin position="347"/>
        <end position="356"/>
    </location>
</feature>
<feature type="strand" evidence="7">
    <location>
        <begin position="360"/>
        <end position="362"/>
    </location>
</feature>
<feature type="helix" evidence="7">
    <location>
        <begin position="372"/>
        <end position="383"/>
    </location>
</feature>
<feature type="helix" evidence="7">
    <location>
        <begin position="388"/>
        <end position="390"/>
    </location>
</feature>
<feature type="helix" evidence="7">
    <location>
        <begin position="403"/>
        <end position="424"/>
    </location>
</feature>
<feature type="helix" evidence="7">
    <location>
        <begin position="430"/>
        <end position="441"/>
    </location>
</feature>
<feature type="helix" evidence="7">
    <location>
        <begin position="443"/>
        <end position="449"/>
    </location>
</feature>
<evidence type="ECO:0000255" key="1">
    <source>
        <dbReference type="HAMAP-Rule" id="MF_00675"/>
    </source>
</evidence>
<evidence type="ECO:0000269" key="2">
    <source>
    </source>
</evidence>
<evidence type="ECO:0000269" key="3">
    <source>
    </source>
</evidence>
<evidence type="ECO:0000303" key="4">
    <source>
    </source>
</evidence>
<evidence type="ECO:0000303" key="5">
    <source>
    </source>
</evidence>
<evidence type="ECO:0000305" key="6"/>
<evidence type="ECO:0007829" key="7">
    <source>
        <dbReference type="PDB" id="1J5S"/>
    </source>
</evidence>
<keyword id="KW-0002">3D-structure</keyword>
<keyword id="KW-0413">Isomerase</keyword>
<keyword id="KW-1185">Reference proteome</keyword>
<gene>
    <name evidence="5" type="primary">uxaC</name>
    <name type="ordered locus">TM_0064</name>
</gene>
<accession>Q9WXR9</accession>
<proteinExistence type="evidence at protein level"/>
<dbReference type="EC" id="5.3.1.12" evidence="1 3"/>
<dbReference type="EMBL" id="AE000512">
    <property type="protein sequence ID" value="AAD35158.1"/>
    <property type="molecule type" value="Genomic_DNA"/>
</dbReference>
<dbReference type="PIR" id="D72422">
    <property type="entry name" value="D72422"/>
</dbReference>
<dbReference type="RefSeq" id="NP_227880.1">
    <property type="nucleotide sequence ID" value="NC_000853.1"/>
</dbReference>
<dbReference type="RefSeq" id="WP_004082556.1">
    <property type="nucleotide sequence ID" value="NZ_CP011107.1"/>
</dbReference>
<dbReference type="PDB" id="1J5S">
    <property type="method" value="X-ray"/>
    <property type="resolution" value="2.85 A"/>
    <property type="chains" value="A/B/C=1-451"/>
</dbReference>
<dbReference type="PDBsum" id="1J5S"/>
<dbReference type="SMR" id="Q9WXR9"/>
<dbReference type="FunCoup" id="Q9WXR9">
    <property type="interactions" value="55"/>
</dbReference>
<dbReference type="STRING" id="243274.TM_0064"/>
<dbReference type="PaxDb" id="243274-THEMA_04485"/>
<dbReference type="EnsemblBacteria" id="AAD35158">
    <property type="protein sequence ID" value="AAD35158"/>
    <property type="gene ID" value="TM_0064"/>
</dbReference>
<dbReference type="KEGG" id="tma:TM0064"/>
<dbReference type="KEGG" id="tmi:THEMA_04485"/>
<dbReference type="KEGG" id="tmm:Tmari_0061"/>
<dbReference type="KEGG" id="tmw:THMA_0060"/>
<dbReference type="eggNOG" id="COG1904">
    <property type="taxonomic scope" value="Bacteria"/>
</dbReference>
<dbReference type="InParanoid" id="Q9WXR9"/>
<dbReference type="OrthoDB" id="9766564at2"/>
<dbReference type="BioCyc" id="MetaCyc:MONOMER-17959"/>
<dbReference type="UniPathway" id="UPA00246"/>
<dbReference type="EvolutionaryTrace" id="Q9WXR9"/>
<dbReference type="Proteomes" id="UP000008183">
    <property type="component" value="Chromosome"/>
</dbReference>
<dbReference type="GO" id="GO:0008880">
    <property type="term" value="F:glucuronate isomerase activity"/>
    <property type="evidence" value="ECO:0007669"/>
    <property type="project" value="UniProtKB-UniRule"/>
</dbReference>
<dbReference type="GO" id="GO:0019698">
    <property type="term" value="P:D-galacturonate catabolic process"/>
    <property type="evidence" value="ECO:0000318"/>
    <property type="project" value="GO_Central"/>
</dbReference>
<dbReference type="GO" id="GO:0042840">
    <property type="term" value="P:D-glucuronate catabolic process"/>
    <property type="evidence" value="ECO:0000318"/>
    <property type="project" value="GO_Central"/>
</dbReference>
<dbReference type="Gene3D" id="3.20.20.140">
    <property type="entry name" value="Metal-dependent hydrolases"/>
    <property type="match status" value="1"/>
</dbReference>
<dbReference type="Gene3D" id="1.10.2020.10">
    <property type="entry name" value="uronate isomerase, domain 2, chain A"/>
    <property type="match status" value="1"/>
</dbReference>
<dbReference type="HAMAP" id="MF_00675">
    <property type="entry name" value="UxaC"/>
    <property type="match status" value="1"/>
</dbReference>
<dbReference type="InterPro" id="IPR032466">
    <property type="entry name" value="Metal_Hydrolase"/>
</dbReference>
<dbReference type="InterPro" id="IPR003766">
    <property type="entry name" value="Uronate_isomerase"/>
</dbReference>
<dbReference type="NCBIfam" id="NF002794">
    <property type="entry name" value="PRK02925.1"/>
    <property type="match status" value="1"/>
</dbReference>
<dbReference type="PANTHER" id="PTHR30068">
    <property type="entry name" value="URONATE ISOMERASE"/>
    <property type="match status" value="1"/>
</dbReference>
<dbReference type="PANTHER" id="PTHR30068:SF4">
    <property type="entry name" value="URONATE ISOMERASE"/>
    <property type="match status" value="1"/>
</dbReference>
<dbReference type="Pfam" id="PF02614">
    <property type="entry name" value="UxaC"/>
    <property type="match status" value="1"/>
</dbReference>
<dbReference type="SUPFAM" id="SSF51556">
    <property type="entry name" value="Metallo-dependent hydrolases"/>
    <property type="match status" value="1"/>
</dbReference>
<comment type="catalytic activity">
    <reaction evidence="1 3">
        <text>D-glucuronate = D-fructuronate</text>
        <dbReference type="Rhea" id="RHEA:13049"/>
        <dbReference type="ChEBI" id="CHEBI:58720"/>
        <dbReference type="ChEBI" id="CHEBI:59863"/>
        <dbReference type="EC" id="5.3.1.12"/>
    </reaction>
</comment>
<comment type="catalytic activity">
    <reaction evidence="1 3">
        <text>aldehydo-D-galacturonate = keto-D-tagaturonate</text>
        <dbReference type="Rhea" id="RHEA:27702"/>
        <dbReference type="ChEBI" id="CHEBI:12952"/>
        <dbReference type="ChEBI" id="CHEBI:17886"/>
    </reaction>
</comment>
<comment type="biophysicochemical properties">
    <kinetics>
        <KM evidence="3">3.5 mM for D-galacturonate</KM>
        <KM evidence="3">2.6 mM for D-glucuronate</KM>
        <text evidence="3">kcat is 3.8 sec(-1) with D-galacturonate as substrate. kcat is 0.35 sec(-1) with D-glucuronate as substrate.</text>
    </kinetics>
</comment>
<comment type="pathway">
    <text evidence="1">Carbohydrate metabolism; pentose and glucuronate interconversion.</text>
</comment>
<comment type="subunit">
    <text evidence="2">Homotrimer.</text>
</comment>
<comment type="similarity">
    <text evidence="1 6">Belongs to the metallo-dependent hydrolases superfamily. Uronate isomerase family.</text>
</comment>
<name>UXAC_THEMA</name>